<gene>
    <name type="primary">NPF8.5</name>
    <name type="synonym">PTR6</name>
    <name type="ordered locus">At1g62200</name>
    <name type="ORF">F19K23.13</name>
</gene>
<organism>
    <name type="scientific">Arabidopsis thaliana</name>
    <name type="common">Mouse-ear cress</name>
    <dbReference type="NCBI Taxonomy" id="3702"/>
    <lineage>
        <taxon>Eukaryota</taxon>
        <taxon>Viridiplantae</taxon>
        <taxon>Streptophyta</taxon>
        <taxon>Embryophyta</taxon>
        <taxon>Tracheophyta</taxon>
        <taxon>Spermatophyta</taxon>
        <taxon>Magnoliopsida</taxon>
        <taxon>eudicotyledons</taxon>
        <taxon>Gunneridae</taxon>
        <taxon>Pentapetalae</taxon>
        <taxon>rosids</taxon>
        <taxon>malvids</taxon>
        <taxon>Brassicales</taxon>
        <taxon>Brassicaceae</taxon>
        <taxon>Camelineae</taxon>
        <taxon>Arabidopsis</taxon>
    </lineage>
</organism>
<name>PTR17_ARATH</name>
<dbReference type="EMBL" id="AC000375">
    <property type="protein sequence ID" value="AAB60766.1"/>
    <property type="status" value="ALT_SEQ"/>
    <property type="molecule type" value="Genomic_DNA"/>
</dbReference>
<dbReference type="EMBL" id="CP002684">
    <property type="protein sequence ID" value="AEE33935.1"/>
    <property type="molecule type" value="Genomic_DNA"/>
</dbReference>
<dbReference type="EMBL" id="AY058836">
    <property type="protein sequence ID" value="AAL24224.1"/>
    <property type="molecule type" value="mRNA"/>
</dbReference>
<dbReference type="PIR" id="E96648">
    <property type="entry name" value="E96648"/>
</dbReference>
<dbReference type="RefSeq" id="NP_176411.2">
    <property type="nucleotide sequence ID" value="NM_104901.2"/>
</dbReference>
<dbReference type="SMR" id="Q93Z20"/>
<dbReference type="BioGRID" id="27737">
    <property type="interactions" value="32"/>
</dbReference>
<dbReference type="FunCoup" id="Q93Z20">
    <property type="interactions" value="1823"/>
</dbReference>
<dbReference type="IntAct" id="Q93Z20">
    <property type="interactions" value="32"/>
</dbReference>
<dbReference type="STRING" id="3702.Q93Z20"/>
<dbReference type="PaxDb" id="3702-AT1G62200.1"/>
<dbReference type="EnsemblPlants" id="AT1G62200.1">
    <property type="protein sequence ID" value="AT1G62200.1"/>
    <property type="gene ID" value="AT1G62200"/>
</dbReference>
<dbReference type="GeneID" id="842516"/>
<dbReference type="Gramene" id="AT1G62200.1">
    <property type="protein sequence ID" value="AT1G62200.1"/>
    <property type="gene ID" value="AT1G62200"/>
</dbReference>
<dbReference type="KEGG" id="ath:AT1G62200"/>
<dbReference type="Araport" id="AT1G62200"/>
<dbReference type="TAIR" id="AT1G62200">
    <property type="gene designation" value="NPF8.5"/>
</dbReference>
<dbReference type="eggNOG" id="KOG1237">
    <property type="taxonomic scope" value="Eukaryota"/>
</dbReference>
<dbReference type="HOGENOM" id="CLU_009313_4_1_1"/>
<dbReference type="InParanoid" id="Q93Z20"/>
<dbReference type="OMA" id="QDNSGWV"/>
<dbReference type="PhylomeDB" id="Q93Z20"/>
<dbReference type="BRENDA" id="7.4.2.5">
    <property type="organism ID" value="399"/>
</dbReference>
<dbReference type="PRO" id="PR:Q93Z20"/>
<dbReference type="Proteomes" id="UP000006548">
    <property type="component" value="Chromosome 1"/>
</dbReference>
<dbReference type="ExpressionAtlas" id="Q93Z20">
    <property type="expression patterns" value="baseline and differential"/>
</dbReference>
<dbReference type="GO" id="GO:0009705">
    <property type="term" value="C:plant-type vacuole membrane"/>
    <property type="evidence" value="ECO:0000314"/>
    <property type="project" value="TAIR"/>
</dbReference>
<dbReference type="GO" id="GO:0022857">
    <property type="term" value="F:transmembrane transporter activity"/>
    <property type="evidence" value="ECO:0007669"/>
    <property type="project" value="InterPro"/>
</dbReference>
<dbReference type="GO" id="GO:0006857">
    <property type="term" value="P:oligopeptide transport"/>
    <property type="evidence" value="ECO:0007669"/>
    <property type="project" value="InterPro"/>
</dbReference>
<dbReference type="Gene3D" id="1.20.1250.20">
    <property type="entry name" value="MFS general substrate transporter like domains"/>
    <property type="match status" value="1"/>
</dbReference>
<dbReference type="InterPro" id="IPR036259">
    <property type="entry name" value="MFS_trans_sf"/>
</dbReference>
<dbReference type="InterPro" id="IPR000109">
    <property type="entry name" value="POT_fam"/>
</dbReference>
<dbReference type="InterPro" id="IPR018456">
    <property type="entry name" value="PTR2_symporter_CS"/>
</dbReference>
<dbReference type="PANTHER" id="PTHR11654">
    <property type="entry name" value="OLIGOPEPTIDE TRANSPORTER-RELATED"/>
    <property type="match status" value="1"/>
</dbReference>
<dbReference type="Pfam" id="PF00854">
    <property type="entry name" value="PTR2"/>
    <property type="match status" value="1"/>
</dbReference>
<dbReference type="SUPFAM" id="SSF103473">
    <property type="entry name" value="MFS general substrate transporter"/>
    <property type="match status" value="1"/>
</dbReference>
<dbReference type="PROSITE" id="PS01022">
    <property type="entry name" value="PTR2_1"/>
    <property type="match status" value="1"/>
</dbReference>
<dbReference type="PROSITE" id="PS01023">
    <property type="entry name" value="PTR2_2"/>
    <property type="match status" value="1"/>
</dbReference>
<protein>
    <recommendedName>
        <fullName>Protein NRT1/ PTR FAMILY 8.5</fullName>
        <shortName>AtNPF8.5</shortName>
    </recommendedName>
    <alternativeName>
        <fullName>Peptide transporter PTR6</fullName>
    </alternativeName>
</protein>
<comment type="subcellular location">
    <subcellularLocation>
        <location evidence="1">Membrane</location>
        <topology evidence="1">Multi-pass membrane protein</topology>
    </subcellularLocation>
</comment>
<comment type="tissue specificity">
    <text evidence="4">Expressed in shoots, roots, stems, leaves, flowers and siliques.</text>
</comment>
<comment type="similarity">
    <text evidence="5">Belongs to the major facilitator superfamily. Proton-dependent oligopeptide transporter (POT/PTR) (TC 2.A.17) family.</text>
</comment>
<comment type="sequence caution" evidence="5">
    <conflict type="erroneous gene model prediction">
        <sequence resource="EMBL-CDS" id="AAB60766"/>
    </conflict>
</comment>
<reference key="1">
    <citation type="journal article" date="2000" name="Nature">
        <title>Sequence and analysis of chromosome 1 of the plant Arabidopsis thaliana.</title>
        <authorList>
            <person name="Theologis A."/>
            <person name="Ecker J.R."/>
            <person name="Palm C.J."/>
            <person name="Federspiel N.A."/>
            <person name="Kaul S."/>
            <person name="White O."/>
            <person name="Alonso J."/>
            <person name="Altafi H."/>
            <person name="Araujo R."/>
            <person name="Bowman C.L."/>
            <person name="Brooks S.Y."/>
            <person name="Buehler E."/>
            <person name="Chan A."/>
            <person name="Chao Q."/>
            <person name="Chen H."/>
            <person name="Cheuk R.F."/>
            <person name="Chin C.W."/>
            <person name="Chung M.K."/>
            <person name="Conn L."/>
            <person name="Conway A.B."/>
            <person name="Conway A.R."/>
            <person name="Creasy T.H."/>
            <person name="Dewar K."/>
            <person name="Dunn P."/>
            <person name="Etgu P."/>
            <person name="Feldblyum T.V."/>
            <person name="Feng J.-D."/>
            <person name="Fong B."/>
            <person name="Fujii C.Y."/>
            <person name="Gill J.E."/>
            <person name="Goldsmith A.D."/>
            <person name="Haas B."/>
            <person name="Hansen N.F."/>
            <person name="Hughes B."/>
            <person name="Huizar L."/>
            <person name="Hunter J.L."/>
            <person name="Jenkins J."/>
            <person name="Johnson-Hopson C."/>
            <person name="Khan S."/>
            <person name="Khaykin E."/>
            <person name="Kim C.J."/>
            <person name="Koo H.L."/>
            <person name="Kremenetskaia I."/>
            <person name="Kurtz D.B."/>
            <person name="Kwan A."/>
            <person name="Lam B."/>
            <person name="Langin-Hooper S."/>
            <person name="Lee A."/>
            <person name="Lee J.M."/>
            <person name="Lenz C.A."/>
            <person name="Li J.H."/>
            <person name="Li Y.-P."/>
            <person name="Lin X."/>
            <person name="Liu S.X."/>
            <person name="Liu Z.A."/>
            <person name="Luros J.S."/>
            <person name="Maiti R."/>
            <person name="Marziali A."/>
            <person name="Militscher J."/>
            <person name="Miranda M."/>
            <person name="Nguyen M."/>
            <person name="Nierman W.C."/>
            <person name="Osborne B.I."/>
            <person name="Pai G."/>
            <person name="Peterson J."/>
            <person name="Pham P.K."/>
            <person name="Rizzo M."/>
            <person name="Rooney T."/>
            <person name="Rowley D."/>
            <person name="Sakano H."/>
            <person name="Salzberg S.L."/>
            <person name="Schwartz J.R."/>
            <person name="Shinn P."/>
            <person name="Southwick A.M."/>
            <person name="Sun H."/>
            <person name="Tallon L.J."/>
            <person name="Tambunga G."/>
            <person name="Toriumi M.J."/>
            <person name="Town C.D."/>
            <person name="Utterback T."/>
            <person name="Van Aken S."/>
            <person name="Vaysberg M."/>
            <person name="Vysotskaia V.S."/>
            <person name="Walker M."/>
            <person name="Wu D."/>
            <person name="Yu G."/>
            <person name="Fraser C.M."/>
            <person name="Venter J.C."/>
            <person name="Davis R.W."/>
        </authorList>
    </citation>
    <scope>NUCLEOTIDE SEQUENCE [LARGE SCALE GENOMIC DNA]</scope>
    <source>
        <strain>cv. Columbia</strain>
    </source>
</reference>
<reference key="2">
    <citation type="journal article" date="2017" name="Plant J.">
        <title>Araport11: a complete reannotation of the Arabidopsis thaliana reference genome.</title>
        <authorList>
            <person name="Cheng C.Y."/>
            <person name="Krishnakumar V."/>
            <person name="Chan A.P."/>
            <person name="Thibaud-Nissen F."/>
            <person name="Schobel S."/>
            <person name="Town C.D."/>
        </authorList>
    </citation>
    <scope>GENOME REANNOTATION</scope>
    <source>
        <strain>cv. Columbia</strain>
    </source>
</reference>
<reference key="3">
    <citation type="journal article" date="2003" name="Science">
        <title>Empirical analysis of transcriptional activity in the Arabidopsis genome.</title>
        <authorList>
            <person name="Yamada K."/>
            <person name="Lim J."/>
            <person name="Dale J.M."/>
            <person name="Chen H."/>
            <person name="Shinn P."/>
            <person name="Palm C.J."/>
            <person name="Southwick A.M."/>
            <person name="Wu H.C."/>
            <person name="Kim C.J."/>
            <person name="Nguyen M."/>
            <person name="Pham P.K."/>
            <person name="Cheuk R.F."/>
            <person name="Karlin-Newmann G."/>
            <person name="Liu S.X."/>
            <person name="Lam B."/>
            <person name="Sakano H."/>
            <person name="Wu T."/>
            <person name="Yu G."/>
            <person name="Miranda M."/>
            <person name="Quach H.L."/>
            <person name="Tripp M."/>
            <person name="Chang C.H."/>
            <person name="Lee J.M."/>
            <person name="Toriumi M.J."/>
            <person name="Chan M.M."/>
            <person name="Tang C.C."/>
            <person name="Onodera C.S."/>
            <person name="Deng J.M."/>
            <person name="Akiyama K."/>
            <person name="Ansari Y."/>
            <person name="Arakawa T."/>
            <person name="Banh J."/>
            <person name="Banno F."/>
            <person name="Bowser L."/>
            <person name="Brooks S.Y."/>
            <person name="Carninci P."/>
            <person name="Chao Q."/>
            <person name="Choy N."/>
            <person name="Enju A."/>
            <person name="Goldsmith A.D."/>
            <person name="Gurjal M."/>
            <person name="Hansen N.F."/>
            <person name="Hayashizaki Y."/>
            <person name="Johnson-Hopson C."/>
            <person name="Hsuan V.W."/>
            <person name="Iida K."/>
            <person name="Karnes M."/>
            <person name="Khan S."/>
            <person name="Koesema E."/>
            <person name="Ishida J."/>
            <person name="Jiang P.X."/>
            <person name="Jones T."/>
            <person name="Kawai J."/>
            <person name="Kamiya A."/>
            <person name="Meyers C."/>
            <person name="Nakajima M."/>
            <person name="Narusaka M."/>
            <person name="Seki M."/>
            <person name="Sakurai T."/>
            <person name="Satou M."/>
            <person name="Tamse R."/>
            <person name="Vaysberg M."/>
            <person name="Wallender E.K."/>
            <person name="Wong C."/>
            <person name="Yamamura Y."/>
            <person name="Yuan S."/>
            <person name="Shinozaki K."/>
            <person name="Davis R.W."/>
            <person name="Theologis A."/>
            <person name="Ecker J.R."/>
        </authorList>
    </citation>
    <scope>NUCLEOTIDE SEQUENCE [LARGE SCALE MRNA]</scope>
    <source>
        <strain>cv. Columbia</strain>
    </source>
</reference>
<reference key="4">
    <citation type="journal article" date="2007" name="FEBS Lett.">
        <title>Nitrate transporters and peptide transporters.</title>
        <authorList>
            <person name="Tsay Y.F."/>
            <person name="Chiu C.C."/>
            <person name="Tsai C.B."/>
            <person name="Ho C.H."/>
            <person name="Hsu P.K."/>
        </authorList>
    </citation>
    <scope>TISSUE SPECIFICITY</scope>
    <scope>GENE FAMILY</scope>
</reference>
<reference key="5">
    <citation type="journal article" date="2010" name="Plant Cell">
        <title>The Arabidopsis nitrate transporter NRT1.8 functions in nitrate removal from the xylem sap and mediates cadmium tolerance.</title>
        <authorList>
            <person name="Li J.Y."/>
            <person name="Fu Y.L."/>
            <person name="Pike S.M."/>
            <person name="Bao J."/>
            <person name="Tian W."/>
            <person name="Zhang Y."/>
            <person name="Chen C.Z."/>
            <person name="Zhang Y."/>
            <person name="Li H.M."/>
            <person name="Huang J."/>
            <person name="Li L.G."/>
            <person name="Schroeder J.I."/>
            <person name="Gassmann W."/>
            <person name="Gong J.M."/>
        </authorList>
    </citation>
    <scope>GENE FAMILY</scope>
</reference>
<reference key="6">
    <citation type="journal article" date="2014" name="Trends Plant Sci.">
        <title>A unified nomenclature of NITRATE TRANSPORTER 1/PEPTIDE TRANSPORTER family members in plants.</title>
        <authorList>
            <person name="Leran S."/>
            <person name="Varala K."/>
            <person name="Boyer J.C."/>
            <person name="Chiurazzi M."/>
            <person name="Crawford N."/>
            <person name="Daniel-Vedele F."/>
            <person name="David L."/>
            <person name="Dickstein R."/>
            <person name="Fernandez E."/>
            <person name="Forde B."/>
            <person name="Gassmann W."/>
            <person name="Geiger D."/>
            <person name="Gojon A."/>
            <person name="Gong J.M."/>
            <person name="Halkier B.A."/>
            <person name="Harris J.M."/>
            <person name="Hedrich R."/>
            <person name="Limami A.M."/>
            <person name="Rentsch D."/>
            <person name="Seo M."/>
            <person name="Tsay Y.F."/>
            <person name="Zhang M."/>
            <person name="Coruzzi G."/>
            <person name="Lacombe B."/>
        </authorList>
    </citation>
    <scope>GENE FAMILY</scope>
    <scope>NOMENCLATURE</scope>
</reference>
<evidence type="ECO:0000250" key="1"/>
<evidence type="ECO:0000250" key="2">
    <source>
        <dbReference type="UniProtKB" id="Q05085"/>
    </source>
</evidence>
<evidence type="ECO:0000255" key="3"/>
<evidence type="ECO:0000269" key="4">
    <source>
    </source>
</evidence>
<evidence type="ECO:0000305" key="5"/>
<keyword id="KW-0472">Membrane</keyword>
<keyword id="KW-0597">Phosphoprotein</keyword>
<keyword id="KW-1185">Reference proteome</keyword>
<keyword id="KW-0812">Transmembrane</keyword>
<keyword id="KW-1133">Transmembrane helix</keyword>
<keyword id="KW-0813">Transport</keyword>
<accession>Q93Z20</accession>
<accession>O04585</accession>
<sequence length="590" mass="65496">MVNSNEEDERRILDVEESLLTQEEVNNHLTGLSSTAEDGSIDIYGNPPSKKKTGNWKACPFILGNECCERLAYYGIAKNLITYYTSELHESNVSAASDVMIWQGTCYITPLIGAVIADSYWGRYWTIASFSAIYFIGMALLTLSASLPVLKPAACAGVAAALCSPATTVQYAVFFTGLYLIALGTGGIKPCVSSFGADQFDDTDPRERVRKASFFNWFYFSINIGSFISSTLLVWVQENVGWGLGFLIPTVFMGVSIASFFIGTPLYRFQKPGGSPITRVCQVLVAAYRKLKLNLPEDISFLYETREKNSMIAGSRKIQHTDGYKFLDKAAVISEYESKSGAFSNPWKLCTVTQVEEVKTLIRMFPIWASGIVYSVLYSQISTLFVQQGRSMNRIIRSFEIPPASFGVFDTLIVLISIPIYDRFLVPFVRRFTGIPKGLTDLQRMGIGLFLSVLSIAAAAIVETVRLQLAQDFVAMSIFWQIPQYILMGIAEVFFFIGRVEFFYDESPDAMRSVCSALALLNTAVGSYLSSLILTLVAYFTALGGKDGWVPDDLNKGHLDYFFWLLVSLGLVNIPVYALICVKHTKKKAL</sequence>
<feature type="chain" id="PRO_0000399951" description="Protein NRT1/ PTR FAMILY 8.5">
    <location>
        <begin position="1"/>
        <end position="590"/>
    </location>
</feature>
<feature type="transmembrane region" description="Helical" evidence="3">
    <location>
        <begin position="96"/>
        <end position="116"/>
    </location>
</feature>
<feature type="transmembrane region" description="Helical" evidence="3">
    <location>
        <begin position="130"/>
        <end position="150"/>
    </location>
</feature>
<feature type="transmembrane region" description="Helical" evidence="3">
    <location>
        <begin position="168"/>
        <end position="188"/>
    </location>
</feature>
<feature type="transmembrane region" description="Helical" evidence="3">
    <location>
        <begin position="214"/>
        <end position="234"/>
    </location>
</feature>
<feature type="transmembrane region" description="Helical" evidence="3">
    <location>
        <begin position="242"/>
        <end position="262"/>
    </location>
</feature>
<feature type="transmembrane region" description="Helical" evidence="3">
    <location>
        <begin position="365"/>
        <end position="385"/>
    </location>
</feature>
<feature type="transmembrane region" description="Helical" evidence="3">
    <location>
        <begin position="401"/>
        <end position="421"/>
    </location>
</feature>
<feature type="transmembrane region" description="Helical" evidence="3">
    <location>
        <begin position="445"/>
        <end position="465"/>
    </location>
</feature>
<feature type="transmembrane region" description="Helical" evidence="3">
    <location>
        <begin position="478"/>
        <end position="498"/>
    </location>
</feature>
<feature type="transmembrane region" description="Helical" evidence="3">
    <location>
        <begin position="524"/>
        <end position="544"/>
    </location>
</feature>
<feature type="transmembrane region" description="Helical" evidence="3">
    <location>
        <begin position="562"/>
        <end position="582"/>
    </location>
</feature>
<feature type="modified residue" description="Phosphothreonine" evidence="2">
    <location>
        <position position="126"/>
    </location>
</feature>
<proteinExistence type="evidence at transcript level"/>